<feature type="chain" id="PRO_1000073698" description="Urease subunit alpha">
    <location>
        <begin position="1"/>
        <end position="568"/>
    </location>
</feature>
<feature type="domain" description="Urease" evidence="1">
    <location>
        <begin position="130"/>
        <end position="568"/>
    </location>
</feature>
<feature type="active site" description="Proton donor" evidence="1">
    <location>
        <position position="321"/>
    </location>
</feature>
<feature type="binding site" evidence="1">
    <location>
        <position position="135"/>
    </location>
    <ligand>
        <name>Ni(2+)</name>
        <dbReference type="ChEBI" id="CHEBI:49786"/>
        <label>1</label>
    </ligand>
</feature>
<feature type="binding site" evidence="1">
    <location>
        <position position="137"/>
    </location>
    <ligand>
        <name>Ni(2+)</name>
        <dbReference type="ChEBI" id="CHEBI:49786"/>
        <label>1</label>
    </ligand>
</feature>
<feature type="binding site" description="via carbamate group" evidence="1">
    <location>
        <position position="218"/>
    </location>
    <ligand>
        <name>Ni(2+)</name>
        <dbReference type="ChEBI" id="CHEBI:49786"/>
        <label>1</label>
    </ligand>
</feature>
<feature type="binding site" description="via carbamate group" evidence="1">
    <location>
        <position position="218"/>
    </location>
    <ligand>
        <name>Ni(2+)</name>
        <dbReference type="ChEBI" id="CHEBI:49786"/>
        <label>2</label>
    </ligand>
</feature>
<feature type="binding site" evidence="1">
    <location>
        <position position="220"/>
    </location>
    <ligand>
        <name>substrate</name>
    </ligand>
</feature>
<feature type="binding site" evidence="1">
    <location>
        <position position="247"/>
    </location>
    <ligand>
        <name>Ni(2+)</name>
        <dbReference type="ChEBI" id="CHEBI:49786"/>
        <label>2</label>
    </ligand>
</feature>
<feature type="binding site" evidence="1">
    <location>
        <position position="273"/>
    </location>
    <ligand>
        <name>Ni(2+)</name>
        <dbReference type="ChEBI" id="CHEBI:49786"/>
        <label>2</label>
    </ligand>
</feature>
<feature type="binding site" evidence="1">
    <location>
        <position position="361"/>
    </location>
    <ligand>
        <name>Ni(2+)</name>
        <dbReference type="ChEBI" id="CHEBI:49786"/>
        <label>1</label>
    </ligand>
</feature>
<feature type="modified residue" description="N6-carboxylysine" evidence="1">
    <location>
        <position position="218"/>
    </location>
</feature>
<gene>
    <name evidence="1" type="primary">ureC</name>
    <name type="ordered locus">Bcen_0421</name>
</gene>
<sequence>MTLRLSRRAYAEMFGPTTGDRVRLADTELLIEIERDFTTYGEEVKFGGGKVIRDGMGQSQRVAADVPDTVITNAVILDHWGIVKADIAIKHGRIAAIGKAGNPDIQPGVTIAIGAATEVIAGEGLIVTAGGIDTHIHFISPQQIDEALASGVTTMLGGGTGPATGTNATTCTPGPWHMERMLQAADGWPINLGFLGKGNASLPQPLVEQIAAGAIGLKLHEDWGTTPAAIDNCLSVADDTDTQVAIHTDTLNEAGFVESTVAAFKGRTIHTYHTEGAGGGHAPDILKVCGEMNVLPSSTNPTRPYTINTLDEHLDMLMVCHHLDPSIAEDLAFAESRIRRETIAAEDILHDLGALSMLSSDSQAMGRVGEVIIRTWQTAHKMKVQRGALPEDTARNDNFRAKRYVAKYTINPALTHGIAHEVGSIEPGKWADLVLWEPAFFGIKPSMILKGGMIAVAQMGDPNASIPTPQPVHYREMFATRGGALARTSLTFVSQMAADAGIAERYGLAKRIVPVRNCRNVTKADMIHNAWRPSISVDPETYDVIADGQLLTCEPATVLPMAQRYFLF</sequence>
<keyword id="KW-0963">Cytoplasm</keyword>
<keyword id="KW-0378">Hydrolase</keyword>
<keyword id="KW-0479">Metal-binding</keyword>
<keyword id="KW-0533">Nickel</keyword>
<accession>Q1BYH2</accession>
<organism>
    <name type="scientific">Burkholderia orbicola (strain AU 1054)</name>
    <dbReference type="NCBI Taxonomy" id="331271"/>
    <lineage>
        <taxon>Bacteria</taxon>
        <taxon>Pseudomonadati</taxon>
        <taxon>Pseudomonadota</taxon>
        <taxon>Betaproteobacteria</taxon>
        <taxon>Burkholderiales</taxon>
        <taxon>Burkholderiaceae</taxon>
        <taxon>Burkholderia</taxon>
        <taxon>Burkholderia cepacia complex</taxon>
        <taxon>Burkholderia orbicola</taxon>
    </lineage>
</organism>
<proteinExistence type="inferred from homology"/>
<dbReference type="EC" id="3.5.1.5" evidence="1"/>
<dbReference type="EMBL" id="CP000378">
    <property type="protein sequence ID" value="ABF75333.1"/>
    <property type="molecule type" value="Genomic_DNA"/>
</dbReference>
<dbReference type="SMR" id="Q1BYH2"/>
<dbReference type="MEROPS" id="M38.982"/>
<dbReference type="HOGENOM" id="CLU_000980_0_0_4"/>
<dbReference type="UniPathway" id="UPA00258">
    <property type="reaction ID" value="UER00370"/>
</dbReference>
<dbReference type="GO" id="GO:0005737">
    <property type="term" value="C:cytoplasm"/>
    <property type="evidence" value="ECO:0007669"/>
    <property type="project" value="UniProtKB-SubCell"/>
</dbReference>
<dbReference type="GO" id="GO:0016151">
    <property type="term" value="F:nickel cation binding"/>
    <property type="evidence" value="ECO:0007669"/>
    <property type="project" value="UniProtKB-UniRule"/>
</dbReference>
<dbReference type="GO" id="GO:0009039">
    <property type="term" value="F:urease activity"/>
    <property type="evidence" value="ECO:0007669"/>
    <property type="project" value="UniProtKB-UniRule"/>
</dbReference>
<dbReference type="GO" id="GO:0043419">
    <property type="term" value="P:urea catabolic process"/>
    <property type="evidence" value="ECO:0007669"/>
    <property type="project" value="UniProtKB-UniRule"/>
</dbReference>
<dbReference type="CDD" id="cd00375">
    <property type="entry name" value="Urease_alpha"/>
    <property type="match status" value="1"/>
</dbReference>
<dbReference type="Gene3D" id="3.20.20.140">
    <property type="entry name" value="Metal-dependent hydrolases"/>
    <property type="match status" value="1"/>
</dbReference>
<dbReference type="Gene3D" id="2.30.40.10">
    <property type="entry name" value="Urease, subunit C, domain 1"/>
    <property type="match status" value="1"/>
</dbReference>
<dbReference type="HAMAP" id="MF_01953">
    <property type="entry name" value="Urease_alpha"/>
    <property type="match status" value="1"/>
</dbReference>
<dbReference type="InterPro" id="IPR006680">
    <property type="entry name" value="Amidohydro-rel"/>
</dbReference>
<dbReference type="InterPro" id="IPR011059">
    <property type="entry name" value="Metal-dep_hydrolase_composite"/>
</dbReference>
<dbReference type="InterPro" id="IPR032466">
    <property type="entry name" value="Metal_Hydrolase"/>
</dbReference>
<dbReference type="InterPro" id="IPR011612">
    <property type="entry name" value="Urease_alpha_N_dom"/>
</dbReference>
<dbReference type="InterPro" id="IPR050112">
    <property type="entry name" value="Urease_alpha_subunit"/>
</dbReference>
<dbReference type="InterPro" id="IPR017950">
    <property type="entry name" value="Urease_AS"/>
</dbReference>
<dbReference type="InterPro" id="IPR005848">
    <property type="entry name" value="Urease_asu"/>
</dbReference>
<dbReference type="InterPro" id="IPR017951">
    <property type="entry name" value="Urease_asu_c"/>
</dbReference>
<dbReference type="InterPro" id="IPR029754">
    <property type="entry name" value="Urease_Ni-bd"/>
</dbReference>
<dbReference type="NCBIfam" id="NF009685">
    <property type="entry name" value="PRK13206.1"/>
    <property type="match status" value="1"/>
</dbReference>
<dbReference type="NCBIfam" id="NF009686">
    <property type="entry name" value="PRK13207.1"/>
    <property type="match status" value="1"/>
</dbReference>
<dbReference type="NCBIfam" id="TIGR01792">
    <property type="entry name" value="urease_alph"/>
    <property type="match status" value="1"/>
</dbReference>
<dbReference type="PANTHER" id="PTHR43440">
    <property type="entry name" value="UREASE"/>
    <property type="match status" value="1"/>
</dbReference>
<dbReference type="PANTHER" id="PTHR43440:SF1">
    <property type="entry name" value="UREASE"/>
    <property type="match status" value="1"/>
</dbReference>
<dbReference type="Pfam" id="PF01979">
    <property type="entry name" value="Amidohydro_1"/>
    <property type="match status" value="1"/>
</dbReference>
<dbReference type="Pfam" id="PF00449">
    <property type="entry name" value="Urease_alpha"/>
    <property type="match status" value="1"/>
</dbReference>
<dbReference type="PRINTS" id="PR01752">
    <property type="entry name" value="UREASE"/>
</dbReference>
<dbReference type="SUPFAM" id="SSF51338">
    <property type="entry name" value="Composite domain of metallo-dependent hydrolases"/>
    <property type="match status" value="2"/>
</dbReference>
<dbReference type="SUPFAM" id="SSF51556">
    <property type="entry name" value="Metallo-dependent hydrolases"/>
    <property type="match status" value="1"/>
</dbReference>
<dbReference type="PROSITE" id="PS01120">
    <property type="entry name" value="UREASE_1"/>
    <property type="match status" value="1"/>
</dbReference>
<dbReference type="PROSITE" id="PS00145">
    <property type="entry name" value="UREASE_2"/>
    <property type="match status" value="1"/>
</dbReference>
<dbReference type="PROSITE" id="PS51368">
    <property type="entry name" value="UREASE_3"/>
    <property type="match status" value="1"/>
</dbReference>
<comment type="catalytic activity">
    <reaction evidence="1">
        <text>urea + 2 H2O + H(+) = hydrogencarbonate + 2 NH4(+)</text>
        <dbReference type="Rhea" id="RHEA:20557"/>
        <dbReference type="ChEBI" id="CHEBI:15377"/>
        <dbReference type="ChEBI" id="CHEBI:15378"/>
        <dbReference type="ChEBI" id="CHEBI:16199"/>
        <dbReference type="ChEBI" id="CHEBI:17544"/>
        <dbReference type="ChEBI" id="CHEBI:28938"/>
        <dbReference type="EC" id="3.5.1.5"/>
    </reaction>
</comment>
<comment type="cofactor">
    <cofactor evidence="1">
        <name>Ni cation</name>
        <dbReference type="ChEBI" id="CHEBI:25516"/>
    </cofactor>
    <text evidence="1">Binds 2 nickel ions per subunit.</text>
</comment>
<comment type="pathway">
    <text evidence="1">Nitrogen metabolism; urea degradation; CO(2) and NH(3) from urea (urease route): step 1/1.</text>
</comment>
<comment type="subunit">
    <text evidence="1">Heterotrimer of UreA (gamma), UreB (beta) and UreC (alpha) subunits. Three heterotrimers associate to form the active enzyme.</text>
</comment>
<comment type="subcellular location">
    <subcellularLocation>
        <location evidence="1">Cytoplasm</location>
    </subcellularLocation>
</comment>
<comment type="PTM">
    <text evidence="1">Carboxylation allows a single lysine to coordinate two nickel ions.</text>
</comment>
<comment type="similarity">
    <text evidence="1">Belongs to the metallo-dependent hydrolases superfamily. Urease alpha subunit family.</text>
</comment>
<name>URE1_BURO1</name>
<reference key="1">
    <citation type="submission" date="2006-05" db="EMBL/GenBank/DDBJ databases">
        <title>Complete sequence of chromosome 1 of Burkholderia cenocepacia AU 1054.</title>
        <authorList>
            <consortium name="US DOE Joint Genome Institute"/>
            <person name="Copeland A."/>
            <person name="Lucas S."/>
            <person name="Lapidus A."/>
            <person name="Barry K."/>
            <person name="Detter J.C."/>
            <person name="Glavina del Rio T."/>
            <person name="Hammon N."/>
            <person name="Israni S."/>
            <person name="Dalin E."/>
            <person name="Tice H."/>
            <person name="Pitluck S."/>
            <person name="Chain P."/>
            <person name="Malfatti S."/>
            <person name="Shin M."/>
            <person name="Vergez L."/>
            <person name="Schmutz J."/>
            <person name="Larimer F."/>
            <person name="Land M."/>
            <person name="Hauser L."/>
            <person name="Kyrpides N."/>
            <person name="Lykidis A."/>
            <person name="LiPuma J.J."/>
            <person name="Konstantinidis K."/>
            <person name="Tiedje J.M."/>
            <person name="Richardson P."/>
        </authorList>
    </citation>
    <scope>NUCLEOTIDE SEQUENCE [LARGE SCALE GENOMIC DNA]</scope>
    <source>
        <strain>AU 1054</strain>
    </source>
</reference>
<protein>
    <recommendedName>
        <fullName evidence="1">Urease subunit alpha</fullName>
        <ecNumber evidence="1">3.5.1.5</ecNumber>
    </recommendedName>
    <alternativeName>
        <fullName evidence="1">Urea amidohydrolase subunit alpha</fullName>
    </alternativeName>
</protein>
<evidence type="ECO:0000255" key="1">
    <source>
        <dbReference type="HAMAP-Rule" id="MF_01953"/>
    </source>
</evidence>